<keyword id="KW-0106">Calcium</keyword>
<keyword id="KW-0963">Cytoplasm</keyword>
<keyword id="KW-0479">Metal-binding</keyword>
<keyword id="KW-0539">Nucleus</keyword>
<keyword id="KW-1185">Reference proteome</keyword>
<keyword id="KW-0677">Repeat</keyword>
<feature type="chain" id="PRO_0000277834" description="Serine/threonine-protein phosphatase 2A regulatory subunit B'' subunit gamma">
    <location>
        <begin position="1"/>
        <end position="453"/>
    </location>
</feature>
<feature type="domain" description="EF-hand 1">
    <location>
        <begin position="273"/>
        <end position="308"/>
    </location>
</feature>
<feature type="domain" description="EF-hand 2">
    <location>
        <begin position="341"/>
        <end position="376"/>
    </location>
</feature>
<feature type="binding site" evidence="2">
    <location>
        <position position="286"/>
    </location>
    <ligand>
        <name>Ca(2+)</name>
        <dbReference type="ChEBI" id="CHEBI:29108"/>
    </ligand>
</feature>
<feature type="binding site" evidence="2">
    <location>
        <position position="288"/>
    </location>
    <ligand>
        <name>Ca(2+)</name>
        <dbReference type="ChEBI" id="CHEBI:29108"/>
    </ligand>
</feature>
<feature type="binding site" evidence="2">
    <location>
        <position position="290"/>
    </location>
    <ligand>
        <name>Ca(2+)</name>
        <dbReference type="ChEBI" id="CHEBI:29108"/>
    </ligand>
</feature>
<feature type="binding site" evidence="2">
    <location>
        <position position="292"/>
    </location>
    <ligand>
        <name>Ca(2+)</name>
        <dbReference type="ChEBI" id="CHEBI:29108"/>
    </ligand>
</feature>
<feature type="binding site" evidence="2">
    <location>
        <position position="297"/>
    </location>
    <ligand>
        <name>Ca(2+)</name>
        <dbReference type="ChEBI" id="CHEBI:29108"/>
    </ligand>
</feature>
<feature type="sequence conflict" description="In Ref. 2; BAA95061." evidence="8" ref="2">
    <original>L</original>
    <variation>P</variation>
    <location>
        <position position="335"/>
    </location>
</feature>
<dbReference type="EMBL" id="AJ238247">
    <property type="protein sequence ID" value="CAB88038.2"/>
    <property type="molecule type" value="mRNA"/>
</dbReference>
<dbReference type="EMBL" id="AB041577">
    <property type="protein sequence ID" value="BAA95061.1"/>
    <property type="molecule type" value="mRNA"/>
</dbReference>
<dbReference type="EMBL" id="AK013403">
    <property type="protein sequence ID" value="BAB28835.1"/>
    <property type="molecule type" value="mRNA"/>
</dbReference>
<dbReference type="EMBL" id="AK028254">
    <property type="protein sequence ID" value="BAC25845.1"/>
    <property type="molecule type" value="mRNA"/>
</dbReference>
<dbReference type="EMBL" id="AK040589">
    <property type="protein sequence ID" value="BAC30637.1"/>
    <property type="molecule type" value="mRNA"/>
</dbReference>
<dbReference type="EMBL" id="AK087572">
    <property type="protein sequence ID" value="BAC39933.1"/>
    <property type="molecule type" value="mRNA"/>
</dbReference>
<dbReference type="EMBL" id="AK088240">
    <property type="protein sequence ID" value="BAC40229.1"/>
    <property type="molecule type" value="mRNA"/>
</dbReference>
<dbReference type="EMBL" id="BC024754">
    <property type="protein sequence ID" value="AAH24754.1"/>
    <property type="molecule type" value="mRNA"/>
</dbReference>
<dbReference type="EMBL" id="BC138295">
    <property type="protein sequence ID" value="AAI38296.1"/>
    <property type="molecule type" value="mRNA"/>
</dbReference>
<dbReference type="EMBL" id="BC138296">
    <property type="protein sequence ID" value="AAI38297.1"/>
    <property type="molecule type" value="mRNA"/>
</dbReference>
<dbReference type="CCDS" id="CCDS36450.1"/>
<dbReference type="RefSeq" id="NP_067504.2">
    <property type="nucleotide sequence ID" value="NM_021529.3"/>
</dbReference>
<dbReference type="RefSeq" id="XP_030102688.1">
    <property type="nucleotide sequence ID" value="XM_030246828.1"/>
</dbReference>
<dbReference type="SMR" id="Q9JK24"/>
<dbReference type="BioGRID" id="208499">
    <property type="interactions" value="1"/>
</dbReference>
<dbReference type="FunCoup" id="Q9JK24">
    <property type="interactions" value="4441"/>
</dbReference>
<dbReference type="STRING" id="10090.ENSMUSP00000021410"/>
<dbReference type="iPTMnet" id="Q9JK24"/>
<dbReference type="PhosphoSitePlus" id="Q9JK24"/>
<dbReference type="PaxDb" id="10090-ENSMUSP00000021410"/>
<dbReference type="PeptideAtlas" id="Q9JK24"/>
<dbReference type="ProteomicsDB" id="294416"/>
<dbReference type="Antibodypedia" id="23186">
    <property type="antibodies" value="164 antibodies from 27 providers"/>
</dbReference>
<dbReference type="DNASU" id="59032"/>
<dbReference type="Ensembl" id="ENSMUST00000021410.10">
    <property type="protein sequence ID" value="ENSMUSP00000021410.9"/>
    <property type="gene ID" value="ENSMUSG00000021022.10"/>
</dbReference>
<dbReference type="GeneID" id="59032"/>
<dbReference type="KEGG" id="mmu:59032"/>
<dbReference type="UCSC" id="uc007nom.1">
    <property type="organism name" value="mouse"/>
</dbReference>
<dbReference type="AGR" id="MGI:1930009"/>
<dbReference type="CTD" id="55012"/>
<dbReference type="MGI" id="MGI:1930009">
    <property type="gene designation" value="Ppp2r3c"/>
</dbReference>
<dbReference type="VEuPathDB" id="HostDB:ENSMUSG00000021022"/>
<dbReference type="eggNOG" id="KOG2562">
    <property type="taxonomic scope" value="Eukaryota"/>
</dbReference>
<dbReference type="GeneTree" id="ENSGT00940000155583"/>
<dbReference type="HOGENOM" id="CLU_035365_1_0_1"/>
<dbReference type="InParanoid" id="Q9JK24"/>
<dbReference type="OMA" id="HKFWAYE"/>
<dbReference type="OrthoDB" id="10265007at2759"/>
<dbReference type="PhylomeDB" id="Q9JK24"/>
<dbReference type="TreeFam" id="TF318412"/>
<dbReference type="BioGRID-ORCS" id="59032">
    <property type="hits" value="21 hits in 78 CRISPR screens"/>
</dbReference>
<dbReference type="ChiTaRS" id="Ppp2r3c">
    <property type="organism name" value="mouse"/>
</dbReference>
<dbReference type="PRO" id="PR:Q9JK24"/>
<dbReference type="Proteomes" id="UP000000589">
    <property type="component" value="Chromosome 12"/>
</dbReference>
<dbReference type="RNAct" id="Q9JK24">
    <property type="molecule type" value="protein"/>
</dbReference>
<dbReference type="Bgee" id="ENSMUSG00000021022">
    <property type="expression patterns" value="Expressed in spermatocyte and 77 other cell types or tissues"/>
</dbReference>
<dbReference type="GO" id="GO:0015629">
    <property type="term" value="C:actin cytoskeleton"/>
    <property type="evidence" value="ECO:0007669"/>
    <property type="project" value="Ensembl"/>
</dbReference>
<dbReference type="GO" id="GO:0005813">
    <property type="term" value="C:centrosome"/>
    <property type="evidence" value="ECO:0007669"/>
    <property type="project" value="Ensembl"/>
</dbReference>
<dbReference type="GO" id="GO:0005929">
    <property type="term" value="C:cilium"/>
    <property type="evidence" value="ECO:0007669"/>
    <property type="project" value="Ensembl"/>
</dbReference>
<dbReference type="GO" id="GO:0005829">
    <property type="term" value="C:cytosol"/>
    <property type="evidence" value="ECO:0007669"/>
    <property type="project" value="Ensembl"/>
</dbReference>
<dbReference type="GO" id="GO:0005794">
    <property type="term" value="C:Golgi apparatus"/>
    <property type="evidence" value="ECO:0007669"/>
    <property type="project" value="Ensembl"/>
</dbReference>
<dbReference type="GO" id="GO:0016604">
    <property type="term" value="C:nuclear body"/>
    <property type="evidence" value="ECO:0007669"/>
    <property type="project" value="Ensembl"/>
</dbReference>
<dbReference type="GO" id="GO:0046872">
    <property type="term" value="F:metal ion binding"/>
    <property type="evidence" value="ECO:0007669"/>
    <property type="project" value="UniProtKB-KW"/>
</dbReference>
<dbReference type="GO" id="GO:0001782">
    <property type="term" value="P:B cell homeostasis"/>
    <property type="evidence" value="ECO:0000315"/>
    <property type="project" value="MGI"/>
</dbReference>
<dbReference type="GO" id="GO:0045579">
    <property type="term" value="P:positive regulation of B cell differentiation"/>
    <property type="evidence" value="ECO:0000315"/>
    <property type="project" value="MGI"/>
</dbReference>
<dbReference type="GO" id="GO:0002759">
    <property type="term" value="P:regulation of antimicrobial humoral response"/>
    <property type="evidence" value="ECO:0000315"/>
    <property type="project" value="MGI"/>
</dbReference>
<dbReference type="GO" id="GO:0050864">
    <property type="term" value="P:regulation of B cell activation"/>
    <property type="evidence" value="ECO:0000315"/>
    <property type="project" value="MGI"/>
</dbReference>
<dbReference type="GO" id="GO:0035303">
    <property type="term" value="P:regulation of dephosphorylation"/>
    <property type="evidence" value="ECO:0007669"/>
    <property type="project" value="InterPro"/>
</dbReference>
<dbReference type="GO" id="GO:0051900">
    <property type="term" value="P:regulation of mitochondrial depolarization"/>
    <property type="evidence" value="ECO:0000315"/>
    <property type="project" value="MGI"/>
</dbReference>
<dbReference type="GO" id="GO:0048536">
    <property type="term" value="P:spleen development"/>
    <property type="evidence" value="ECO:0000315"/>
    <property type="project" value="MGI"/>
</dbReference>
<dbReference type="GO" id="GO:0043029">
    <property type="term" value="P:T cell homeostasis"/>
    <property type="evidence" value="ECO:0000315"/>
    <property type="project" value="MGI"/>
</dbReference>
<dbReference type="CDD" id="cd21505">
    <property type="entry name" value="PPP2R3C"/>
    <property type="match status" value="1"/>
</dbReference>
<dbReference type="FunFam" id="1.10.238.10:FF:000091">
    <property type="entry name" value="Serine/threonine-protein phosphatase 2A regulatory subunit B'' subunit gamma"/>
    <property type="match status" value="1"/>
</dbReference>
<dbReference type="FunFam" id="1.10.238.220:FF:000002">
    <property type="entry name" value="Serine/threonine-protein phosphatase 2A regulatory subunit B'' subunit gamma"/>
    <property type="match status" value="1"/>
</dbReference>
<dbReference type="Gene3D" id="1.10.238.220">
    <property type="match status" value="1"/>
</dbReference>
<dbReference type="Gene3D" id="1.10.238.10">
    <property type="entry name" value="EF-hand"/>
    <property type="match status" value="1"/>
</dbReference>
<dbReference type="InterPro" id="IPR011992">
    <property type="entry name" value="EF-hand-dom_pair"/>
</dbReference>
<dbReference type="InterPro" id="IPR041534">
    <property type="entry name" value="EF-hand_13"/>
</dbReference>
<dbReference type="InterPro" id="IPR018247">
    <property type="entry name" value="EF_Hand_1_Ca_BS"/>
</dbReference>
<dbReference type="InterPro" id="IPR039865">
    <property type="entry name" value="PPP2R3C"/>
</dbReference>
<dbReference type="PANTHER" id="PTHR12085">
    <property type="entry name" value="SERINE/THREONINE-PROTEIN PHOSPHATASE 2A REGULATORY SUBUNIT B'' SUBUNIT GAMMA"/>
    <property type="match status" value="1"/>
</dbReference>
<dbReference type="PANTHER" id="PTHR12085:SF3">
    <property type="entry name" value="SERINE_THREONINE-PROTEIN PHOSPHATASE 2A REGULATORY SUBUNIT B'' SUBUNIT GAMMA"/>
    <property type="match status" value="1"/>
</dbReference>
<dbReference type="Pfam" id="PF17958">
    <property type="entry name" value="EF-hand_13"/>
    <property type="match status" value="1"/>
</dbReference>
<dbReference type="SUPFAM" id="SSF47473">
    <property type="entry name" value="EF-hand"/>
    <property type="match status" value="2"/>
</dbReference>
<dbReference type="PROSITE" id="PS00018">
    <property type="entry name" value="EF_HAND_1"/>
    <property type="match status" value="1"/>
</dbReference>
<organism>
    <name type="scientific">Mus musculus</name>
    <name type="common">Mouse</name>
    <dbReference type="NCBI Taxonomy" id="10090"/>
    <lineage>
        <taxon>Eukaryota</taxon>
        <taxon>Metazoa</taxon>
        <taxon>Chordata</taxon>
        <taxon>Craniata</taxon>
        <taxon>Vertebrata</taxon>
        <taxon>Euteleostomi</taxon>
        <taxon>Mammalia</taxon>
        <taxon>Eutheria</taxon>
        <taxon>Euarchontoglires</taxon>
        <taxon>Glires</taxon>
        <taxon>Rodentia</taxon>
        <taxon>Myomorpha</taxon>
        <taxon>Muroidea</taxon>
        <taxon>Muridae</taxon>
        <taxon>Murinae</taxon>
        <taxon>Mus</taxon>
        <taxon>Mus</taxon>
    </lineage>
</organism>
<reference key="1">
    <citation type="journal article" date="2002" name="Genes Cells">
        <title>MCM3-binding GANP DNA-primase is associated with a novel phosphatase component G5PR.</title>
        <authorList>
            <person name="Kono Y."/>
            <person name="Maeda K."/>
            <person name="Kuwahara K."/>
            <person name="Yamamoto H."/>
            <person name="Miyamoto E."/>
            <person name="Yonezawa K."/>
            <person name="Takagi K."/>
            <person name="Sakaguchi N."/>
        </authorList>
    </citation>
    <scope>NUCLEOTIDE SEQUENCE [MRNA]</scope>
    <scope>FUNCTION</scope>
    <scope>INTERACTION WITH MCM3AP; PPP2CA; PPP2R1A AND PPP5C</scope>
    <scope>TISSUE SPECIFICITY</scope>
    <scope>SUBCELLULAR LOCATION</scope>
    <source>
        <tissue>B-cell</tissue>
    </source>
</reference>
<reference key="2">
    <citation type="submission" date="2000-04" db="EMBL/GenBank/DDBJ databases">
        <title>Isolation of full-length cDNA clones from mouse brain cDNA library made by oligo-capping method.</title>
        <authorList>
            <person name="Osada N."/>
            <person name="Kusuda J."/>
            <person name="Tanuma R."/>
            <person name="Ito A."/>
            <person name="Hirata M."/>
            <person name="Sugano S."/>
            <person name="Hashimoto K."/>
        </authorList>
    </citation>
    <scope>NUCLEOTIDE SEQUENCE [LARGE SCALE MRNA]</scope>
    <source>
        <strain>C57BL/6J</strain>
        <tissue>Brain</tissue>
    </source>
</reference>
<reference key="3">
    <citation type="journal article" date="2005" name="Science">
        <title>The transcriptional landscape of the mammalian genome.</title>
        <authorList>
            <person name="Carninci P."/>
            <person name="Kasukawa T."/>
            <person name="Katayama S."/>
            <person name="Gough J."/>
            <person name="Frith M.C."/>
            <person name="Maeda N."/>
            <person name="Oyama R."/>
            <person name="Ravasi T."/>
            <person name="Lenhard B."/>
            <person name="Wells C."/>
            <person name="Kodzius R."/>
            <person name="Shimokawa K."/>
            <person name="Bajic V.B."/>
            <person name="Brenner S.E."/>
            <person name="Batalov S."/>
            <person name="Forrest A.R."/>
            <person name="Zavolan M."/>
            <person name="Davis M.J."/>
            <person name="Wilming L.G."/>
            <person name="Aidinis V."/>
            <person name="Allen J.E."/>
            <person name="Ambesi-Impiombato A."/>
            <person name="Apweiler R."/>
            <person name="Aturaliya R.N."/>
            <person name="Bailey T.L."/>
            <person name="Bansal M."/>
            <person name="Baxter L."/>
            <person name="Beisel K.W."/>
            <person name="Bersano T."/>
            <person name="Bono H."/>
            <person name="Chalk A.M."/>
            <person name="Chiu K.P."/>
            <person name="Choudhary V."/>
            <person name="Christoffels A."/>
            <person name="Clutterbuck D.R."/>
            <person name="Crowe M.L."/>
            <person name="Dalla E."/>
            <person name="Dalrymple B.P."/>
            <person name="de Bono B."/>
            <person name="Della Gatta G."/>
            <person name="di Bernardo D."/>
            <person name="Down T."/>
            <person name="Engstrom P."/>
            <person name="Fagiolini M."/>
            <person name="Faulkner G."/>
            <person name="Fletcher C.F."/>
            <person name="Fukushima T."/>
            <person name="Furuno M."/>
            <person name="Futaki S."/>
            <person name="Gariboldi M."/>
            <person name="Georgii-Hemming P."/>
            <person name="Gingeras T.R."/>
            <person name="Gojobori T."/>
            <person name="Green R.E."/>
            <person name="Gustincich S."/>
            <person name="Harbers M."/>
            <person name="Hayashi Y."/>
            <person name="Hensch T.K."/>
            <person name="Hirokawa N."/>
            <person name="Hill D."/>
            <person name="Huminiecki L."/>
            <person name="Iacono M."/>
            <person name="Ikeo K."/>
            <person name="Iwama A."/>
            <person name="Ishikawa T."/>
            <person name="Jakt M."/>
            <person name="Kanapin A."/>
            <person name="Katoh M."/>
            <person name="Kawasawa Y."/>
            <person name="Kelso J."/>
            <person name="Kitamura H."/>
            <person name="Kitano H."/>
            <person name="Kollias G."/>
            <person name="Krishnan S.P."/>
            <person name="Kruger A."/>
            <person name="Kummerfeld S.K."/>
            <person name="Kurochkin I.V."/>
            <person name="Lareau L.F."/>
            <person name="Lazarevic D."/>
            <person name="Lipovich L."/>
            <person name="Liu J."/>
            <person name="Liuni S."/>
            <person name="McWilliam S."/>
            <person name="Madan Babu M."/>
            <person name="Madera M."/>
            <person name="Marchionni L."/>
            <person name="Matsuda H."/>
            <person name="Matsuzawa S."/>
            <person name="Miki H."/>
            <person name="Mignone F."/>
            <person name="Miyake S."/>
            <person name="Morris K."/>
            <person name="Mottagui-Tabar S."/>
            <person name="Mulder N."/>
            <person name="Nakano N."/>
            <person name="Nakauchi H."/>
            <person name="Ng P."/>
            <person name="Nilsson R."/>
            <person name="Nishiguchi S."/>
            <person name="Nishikawa S."/>
            <person name="Nori F."/>
            <person name="Ohara O."/>
            <person name="Okazaki Y."/>
            <person name="Orlando V."/>
            <person name="Pang K.C."/>
            <person name="Pavan W.J."/>
            <person name="Pavesi G."/>
            <person name="Pesole G."/>
            <person name="Petrovsky N."/>
            <person name="Piazza S."/>
            <person name="Reed J."/>
            <person name="Reid J.F."/>
            <person name="Ring B.Z."/>
            <person name="Ringwald M."/>
            <person name="Rost B."/>
            <person name="Ruan Y."/>
            <person name="Salzberg S.L."/>
            <person name="Sandelin A."/>
            <person name="Schneider C."/>
            <person name="Schoenbach C."/>
            <person name="Sekiguchi K."/>
            <person name="Semple C.A."/>
            <person name="Seno S."/>
            <person name="Sessa L."/>
            <person name="Sheng Y."/>
            <person name="Shibata Y."/>
            <person name="Shimada H."/>
            <person name="Shimada K."/>
            <person name="Silva D."/>
            <person name="Sinclair B."/>
            <person name="Sperling S."/>
            <person name="Stupka E."/>
            <person name="Sugiura K."/>
            <person name="Sultana R."/>
            <person name="Takenaka Y."/>
            <person name="Taki K."/>
            <person name="Tammoja K."/>
            <person name="Tan S.L."/>
            <person name="Tang S."/>
            <person name="Taylor M.S."/>
            <person name="Tegner J."/>
            <person name="Teichmann S.A."/>
            <person name="Ueda H.R."/>
            <person name="van Nimwegen E."/>
            <person name="Verardo R."/>
            <person name="Wei C.L."/>
            <person name="Yagi K."/>
            <person name="Yamanishi H."/>
            <person name="Zabarovsky E."/>
            <person name="Zhu S."/>
            <person name="Zimmer A."/>
            <person name="Hide W."/>
            <person name="Bult C."/>
            <person name="Grimmond S.M."/>
            <person name="Teasdale R.D."/>
            <person name="Liu E.T."/>
            <person name="Brusic V."/>
            <person name="Quackenbush J."/>
            <person name="Wahlestedt C."/>
            <person name="Mattick J.S."/>
            <person name="Hume D.A."/>
            <person name="Kai C."/>
            <person name="Sasaki D."/>
            <person name="Tomaru Y."/>
            <person name="Fukuda S."/>
            <person name="Kanamori-Katayama M."/>
            <person name="Suzuki M."/>
            <person name="Aoki J."/>
            <person name="Arakawa T."/>
            <person name="Iida J."/>
            <person name="Imamura K."/>
            <person name="Itoh M."/>
            <person name="Kato T."/>
            <person name="Kawaji H."/>
            <person name="Kawagashira N."/>
            <person name="Kawashima T."/>
            <person name="Kojima M."/>
            <person name="Kondo S."/>
            <person name="Konno H."/>
            <person name="Nakano K."/>
            <person name="Ninomiya N."/>
            <person name="Nishio T."/>
            <person name="Okada M."/>
            <person name="Plessy C."/>
            <person name="Shibata K."/>
            <person name="Shiraki T."/>
            <person name="Suzuki S."/>
            <person name="Tagami M."/>
            <person name="Waki K."/>
            <person name="Watahiki A."/>
            <person name="Okamura-Oho Y."/>
            <person name="Suzuki H."/>
            <person name="Kawai J."/>
            <person name="Hayashizaki Y."/>
        </authorList>
    </citation>
    <scope>NUCLEOTIDE SEQUENCE [LARGE SCALE MRNA]</scope>
    <source>
        <strain>C57BL/6J</strain>
        <strain>NOD</strain>
        <tissue>Embryo</tissue>
        <tissue>Head</tissue>
        <tissue>Oviduct</tissue>
        <tissue>Thymus</tissue>
    </source>
</reference>
<reference key="4">
    <citation type="journal article" date="2004" name="Genome Res.">
        <title>The status, quality, and expansion of the NIH full-length cDNA project: the Mammalian Gene Collection (MGC).</title>
        <authorList>
            <consortium name="The MGC Project Team"/>
        </authorList>
    </citation>
    <scope>NUCLEOTIDE SEQUENCE [LARGE SCALE MRNA]</scope>
    <source>
        <strain>FVB/N-3</strain>
        <tissue>Brain</tissue>
        <tissue>Mammary tumor</tissue>
    </source>
</reference>
<reference key="5">
    <citation type="journal article" date="2005" name="Genomics">
        <title>Defining a holoprosencephaly locus on human chromosome 14q13 and characterization of potential candidate genes.</title>
        <authorList>
            <person name="Kamnasaran D."/>
            <person name="Chen C.-P."/>
            <person name="Devriendt K."/>
            <person name="Mehta L."/>
            <person name="Cox D.W."/>
        </authorList>
    </citation>
    <scope>DEVELOPMENTAL STAGE</scope>
    <source>
        <tissue>Brain</tissue>
    </source>
</reference>
<reference key="6">
    <citation type="journal article" date="2005" name="J. Exp. Med.">
        <title>Protein phosphatase subunit G5PR is needed for inhibition of B cell receptor-induced apoptosis.</title>
        <authorList>
            <person name="Xing Y."/>
            <person name="Igarashi H."/>
            <person name="Wang X."/>
            <person name="Sakaguchi N."/>
        </authorList>
    </citation>
    <scope>FUNCTION</scope>
    <scope>DISRUPTION PHENOTYPE</scope>
</reference>
<reference key="7">
    <citation type="journal article" date="2006" name="Biochem. Biophys. Res. Commun.">
        <title>BCR-crosslinking induces a transcription of protein phosphatase component G5PR that is required for mature B-cell survival.</title>
        <authorList>
            <person name="Huq Ronny F.M."/>
            <person name="Igarashi H."/>
            <person name="Sakaguchi N."/>
        </authorList>
    </citation>
    <scope>FUNCTION</scope>
    <scope>INDUCTION</scope>
</reference>
<evidence type="ECO:0000250" key="1">
    <source>
        <dbReference type="UniProtKB" id="Q969Q6"/>
    </source>
</evidence>
<evidence type="ECO:0000255" key="2">
    <source>
        <dbReference type="PROSITE-ProRule" id="PRU10142"/>
    </source>
</evidence>
<evidence type="ECO:0000269" key="3">
    <source>
    </source>
</evidence>
<evidence type="ECO:0000269" key="4">
    <source>
    </source>
</evidence>
<evidence type="ECO:0000269" key="5">
    <source>
    </source>
</evidence>
<evidence type="ECO:0000269" key="6">
    <source>
    </source>
</evidence>
<evidence type="ECO:0000303" key="7">
    <source>
    </source>
</evidence>
<evidence type="ECO:0000305" key="8"/>
<name>P2R3C_MOUSE</name>
<protein>
    <recommendedName>
        <fullName>Serine/threonine-protein phosphatase 2A regulatory subunit B'' subunit gamma</fullName>
    </recommendedName>
    <alternativeName>
        <fullName evidence="7">Protein phosphatase subunit G5PR</fullName>
    </alternativeName>
</protein>
<sequence length="453" mass="53407">MDWKDVLRRRLASPNTDPKRKKSEQELKDEEMDLFTKYYSEWKGGRKNTNEFYKTIPRFYYRLPAEDEVLLQKLREESRAVFLQRKSRELLDNEELQNLWFLLDKHQIPPMIGEEAMINYENFLKVGEKAGPKCKQFFTAKVFAKLLHTDSYGRISIMQFFNYVMRKVWLHQTRIGLSLYDVAGQGYLRESDLENYILELIPTLPQLDGLEKSFYSFYVCTAVRKFFFFLDPLRTGKIKIQDILACSFLDDLLELRDEELSKESQETNWFSAPSALRVYGQYLNLDKDHNGMLSKEELSRYGTATMTNVFLDRVFQECLTYDGEMDYKTYLDFVLALENRKEPAALQYIFKLLDIENKGYLNVFSLNYFFRAIQELMKIHGQDPVSFQDVKDEIFDMVKPKDPLKISLQDLINSNQGDTVTTILIDLNGFWTYENREALVANDNENSADLDDT</sequence>
<proteinExistence type="evidence at protein level"/>
<accession>Q9JK24</accession>
<accession>B2RR97</accession>
<accession>Q9CSA6</accession>
<accession>Q9JJD2</accession>
<gene>
    <name type="primary">Ppp2r3c</name>
    <name evidence="7" type="synonym">G5pr</name>
    <name type="ORF">MNCb-1932</name>
</gene>
<comment type="function">
    <text evidence="1 3 5 6">May regulate MCM3AP phosphorylation through phosphatase recruitment (PubMed:12167160). May act as a negative regulator of ABCB1 expression and function through the dephosphorylation of ABCB1 by TFPI2/PPP2R3C complex (By similarity). May play a role in the activation-induced cell death of B-cells (PubMed:16129705, PubMed:16343422).</text>
</comment>
<comment type="subunit">
    <text evidence="1 3">Interacts with MCM3AP/GANP, PPP5C, and the phosphatase 2A core enzyme composed of the PPP2CA catalytic subunit and the constant regulatory subunit PPP2R1A. Finds in a complex with ABCB1, TFPI2 and PPP2R3C; leading to the dephosphorylation of ABCB1.</text>
</comment>
<comment type="subcellular location">
    <subcellularLocation>
        <location evidence="3">Nucleus</location>
    </subcellularLocation>
    <subcellularLocation>
        <location evidence="3">Cytoplasm</location>
    </subcellularLocation>
    <text>Excluded from the nucleoli. Localization is cell cycle-dependent. Localizes to the cytoplasm during cytokinesis.</text>
</comment>
<comment type="tissue specificity">
    <text evidence="3">Expressed in all tissues tested including heart, brain, spleen, thymus, lung, liver, kidney and testis.</text>
</comment>
<comment type="developmental stage">
    <text evidence="4">Detected from 6 to 12 dpc in whole embryos and from 14 to 18 dpc in the heads of the embryos. Expressed in central nervous system, spine, face, pharynx, limbs and viscera at 11 dpc.</text>
</comment>
<comment type="induction">
    <text evidence="6">Up-regulated upon B-cell receptor cross-linking.</text>
</comment>
<comment type="disruption phenotype">
    <text evidence="5">Mice display a reduction in the number of mature B-cells and an impaired B-cell proliferation upon B-Cell receptor cross-linking probably due to a loss of inhibition of BCR-induced apoptosis. PPP2R3C overexpression protects B-cells from activation-induced cell death.</text>
</comment>